<organism>
    <name type="scientific">Saccharomyces cerevisiae (strain ATCC 204508 / S288c)</name>
    <name type="common">Baker's yeast</name>
    <dbReference type="NCBI Taxonomy" id="559292"/>
    <lineage>
        <taxon>Eukaryota</taxon>
        <taxon>Fungi</taxon>
        <taxon>Dikarya</taxon>
        <taxon>Ascomycota</taxon>
        <taxon>Saccharomycotina</taxon>
        <taxon>Saccharomycetes</taxon>
        <taxon>Saccharomycetales</taxon>
        <taxon>Saccharomycetaceae</taxon>
        <taxon>Saccharomyces</taxon>
    </lineage>
</organism>
<protein>
    <recommendedName>
        <fullName>Replication factor C subunit 2</fullName>
        <shortName>Replication factor C2</shortName>
    </recommendedName>
    <alternativeName>
        <fullName>Activator 1 41 kDa subunit</fullName>
    </alternativeName>
</protein>
<keyword id="KW-0002">3D-structure</keyword>
<keyword id="KW-0007">Acetylation</keyword>
<keyword id="KW-0067">ATP-binding</keyword>
<keyword id="KW-0131">Cell cycle</keyword>
<keyword id="KW-0235">DNA replication</keyword>
<keyword id="KW-0238">DNA-binding</keyword>
<keyword id="KW-0547">Nucleotide-binding</keyword>
<keyword id="KW-0539">Nucleus</keyword>
<keyword id="KW-1185">Reference proteome</keyword>
<proteinExistence type="evidence at protein level"/>
<gene>
    <name type="primary">RFC2</name>
    <name type="ordered locus">YJR068W</name>
    <name type="ORF">J1808</name>
</gene>
<sequence>MFEGFGPNKKRKISKLAAEQSLAQQPWVEKYRPKNLDEVTAQDHAVTVLKKTLKSANLPHMLFYGPPGTGKTSTILALTKELYGPDLMKSRILELNASDERGISIVREKVKNFARLTVSKPSKHDLENYPCPPYKIIILDEADSMTADAQSALRRTMETYSGVTRFCLICNYVTRIIDPLASRCSKFRFKALDASNAIDRLRFISEQENVKCDDGVLERILDISAGDLRRGITLLQSASKGAQYLGDGKNITSTQVEELAGVVPHDILIEIVEKVKSGDFDEIKKYVNTFMKSGWSAASVVNQLHEYYITNDNFDTNFKNQISWLLFTTDSRLNNGTNEHIQLLNLLVKISQL</sequence>
<feature type="chain" id="PRO_0000121760" description="Replication factor C subunit 2">
    <location>
        <begin position="1"/>
        <end position="353"/>
    </location>
</feature>
<feature type="binding site">
    <location>
        <position position="28"/>
    </location>
    <ligand>
        <name>ATP</name>
        <dbReference type="ChEBI" id="CHEBI:30616"/>
    </ligand>
</feature>
<feature type="binding site">
    <location>
        <position position="32"/>
    </location>
    <ligand>
        <name>ATP</name>
        <dbReference type="ChEBI" id="CHEBI:30616"/>
    </ligand>
</feature>
<feature type="binding site">
    <location>
        <begin position="65"/>
        <end position="73"/>
    </location>
    <ligand>
        <name>ATP</name>
        <dbReference type="ChEBI" id="CHEBI:30616"/>
    </ligand>
</feature>
<feature type="binding site">
    <location>
        <position position="171"/>
    </location>
    <ligand>
        <name>ATP</name>
        <dbReference type="ChEBI" id="CHEBI:30616"/>
    </ligand>
</feature>
<feature type="binding site">
    <location>
        <position position="229"/>
    </location>
    <ligand>
        <name>ATP</name>
        <dbReference type="ChEBI" id="CHEBI:30616"/>
    </ligand>
</feature>
<feature type="modified residue" description="N-acetylmethionine" evidence="12">
    <location>
        <position position="1"/>
    </location>
</feature>
<feature type="sequence conflict" description="In Ref. 6; AAS56246." evidence="11" ref="6">
    <original>K</original>
    <variation>R</variation>
    <location>
        <position position="12"/>
    </location>
</feature>
<feature type="helix" evidence="15">
    <location>
        <begin position="22"/>
        <end position="24"/>
    </location>
</feature>
<feature type="helix" evidence="15">
    <location>
        <begin position="27"/>
        <end position="30"/>
    </location>
</feature>
<feature type="helix" evidence="15">
    <location>
        <begin position="36"/>
        <end position="38"/>
    </location>
</feature>
<feature type="strand" evidence="17">
    <location>
        <begin position="39"/>
        <end position="41"/>
    </location>
</feature>
<feature type="helix" evidence="15">
    <location>
        <begin position="43"/>
        <end position="55"/>
    </location>
</feature>
<feature type="strand" evidence="15">
    <location>
        <begin position="61"/>
        <end position="64"/>
    </location>
</feature>
<feature type="strand" evidence="16">
    <location>
        <begin position="66"/>
        <end position="70"/>
    </location>
</feature>
<feature type="helix" evidence="15">
    <location>
        <begin position="71"/>
        <end position="82"/>
    </location>
</feature>
<feature type="turn" evidence="15">
    <location>
        <begin position="85"/>
        <end position="87"/>
    </location>
</feature>
<feature type="helix" evidence="15">
    <location>
        <begin position="88"/>
        <end position="91"/>
    </location>
</feature>
<feature type="strand" evidence="15">
    <location>
        <begin position="92"/>
        <end position="95"/>
    </location>
</feature>
<feature type="strand" evidence="13">
    <location>
        <begin position="97"/>
        <end position="99"/>
    </location>
</feature>
<feature type="helix" evidence="15">
    <location>
        <begin position="103"/>
        <end position="115"/>
    </location>
</feature>
<feature type="helix" evidence="15">
    <location>
        <begin position="123"/>
        <end position="128"/>
    </location>
</feature>
<feature type="strand" evidence="15">
    <location>
        <begin position="135"/>
        <end position="139"/>
    </location>
</feature>
<feature type="helix" evidence="15">
    <location>
        <begin position="142"/>
        <end position="144"/>
    </location>
</feature>
<feature type="helix" evidence="15">
    <location>
        <begin position="147"/>
        <end position="151"/>
    </location>
</feature>
<feature type="helix" evidence="15">
    <location>
        <begin position="154"/>
        <end position="159"/>
    </location>
</feature>
<feature type="turn" evidence="15">
    <location>
        <begin position="160"/>
        <end position="163"/>
    </location>
</feature>
<feature type="strand" evidence="15">
    <location>
        <begin position="164"/>
        <end position="171"/>
    </location>
</feature>
<feature type="helix" evidence="15">
    <location>
        <begin position="173"/>
        <end position="175"/>
    </location>
</feature>
<feature type="helix" evidence="15">
    <location>
        <begin position="178"/>
        <end position="183"/>
    </location>
</feature>
<feature type="strand" evidence="15">
    <location>
        <begin position="184"/>
        <end position="188"/>
    </location>
</feature>
<feature type="turn" evidence="15">
    <location>
        <begin position="194"/>
        <end position="196"/>
    </location>
</feature>
<feature type="helix" evidence="15">
    <location>
        <begin position="198"/>
        <end position="207"/>
    </location>
</feature>
<feature type="strand" evidence="14">
    <location>
        <begin position="212"/>
        <end position="215"/>
    </location>
</feature>
<feature type="helix" evidence="15">
    <location>
        <begin position="216"/>
        <end position="224"/>
    </location>
</feature>
<feature type="helix" evidence="15">
    <location>
        <begin position="228"/>
        <end position="245"/>
    </location>
</feature>
<feature type="helix" evidence="15">
    <location>
        <begin position="253"/>
        <end position="260"/>
    </location>
</feature>
<feature type="helix" evidence="15">
    <location>
        <begin position="265"/>
        <end position="277"/>
    </location>
</feature>
<feature type="helix" evidence="15">
    <location>
        <begin position="280"/>
        <end position="290"/>
    </location>
</feature>
<feature type="helix" evidence="15">
    <location>
        <begin position="291"/>
        <end position="293"/>
    </location>
</feature>
<feature type="helix" evidence="15">
    <location>
        <begin position="297"/>
        <end position="309"/>
    </location>
</feature>
<feature type="strand" evidence="15">
    <location>
        <begin position="312"/>
        <end position="314"/>
    </location>
</feature>
<feature type="helix" evidence="15">
    <location>
        <begin position="316"/>
        <end position="334"/>
    </location>
</feature>
<feature type="helix" evidence="15">
    <location>
        <begin position="339"/>
        <end position="351"/>
    </location>
</feature>
<comment type="function">
    <text evidence="3 4 9">Component of ATP-dependent clamp loader (RFC and RFC-like) complexes for DNA clamps, such as the POL30/PCNA homotrimer and the checkpoint clamp DDC1:MEC3:RAD17 complex. During a clamp loading circle, the RFC:clamp complex binds to DNA and the recognition of the double-stranded/single-stranded junction stimulates ATP hydrolysis by RFC. The complex presumably provides bipartite ATP sites in which one subunit supplies a catalytic site for hydrolysis of ATP bound to the neighboring subunit. Dissociation of RFC from the clamp leaves the clamp encircling DNA. Component of the replication factor C (RFC or activator 1) complex which loads POL30/PCNA and acts during elongation of primed DNA templates by DNA polymerase delta and epsilon. RFC has an essential but redundant activity in sister chromatid cohesion establishment. Component of the RFC-like complex CTF18-RFC which is required for efficient establishment of chromosome cohesion during S-phase and may load or unload POL30/PCNA. Component of the RFC-like RAD24-RFC complex which loads the checkpoint clamp DDC1:MEC3:RAD17 complex and is involved in DNA repair pathways. Component of the RFC-like ELG1-RFC complex which appears to have a role in DNA replication, replication fork re-start, recombination and repair. RFC2 binds ATP and single-stranded DNA.</text>
</comment>
<comment type="subunit">
    <text evidence="1 2 3 4 5 6 8 9 10">Replication factor C (RFC) is a heteropentamer of subunits RFC1, RFC2, RFC3, RFC4 and RFC5 and forms a complex with POL30/PCNA in the presence of ATP. Component of the RAD24-RFC complex which consists of RAD14, RFC2, RFC3, RFC4 and RFC5 and associates with the checkpoint clamp DDC1:MEC3:RAD17 complex. Component of the ELG1-RFC complex which consists of ELG1, RFC2, RFC3, RFC4 and RFC5. Component of the CTF18-RFC complex, which consists of CTF18, CTF8, DCC1, RFC2, RFC3, RFC4 and RFC5. RFC2 interacts with ECO1.</text>
</comment>
<comment type="interaction">
    <interactant intactId="EBI-14992">
        <id>P40348</id>
    </interactant>
    <interactant intactId="EBI-4560">
        <id>P49956</id>
        <label>CTF18</label>
    </interactant>
    <organismsDiffer>false</organismsDiffer>
    <experiments>3</experiments>
</comment>
<comment type="interaction">
    <interactant intactId="EBI-14992">
        <id>P40348</id>
    </interactant>
    <interactant intactId="EBI-5216">
        <id>P38877</id>
        <label>CTF8</label>
    </interactant>
    <organismsDiffer>false</organismsDiffer>
    <experiments>3</experiments>
</comment>
<comment type="interaction">
    <interactant intactId="EBI-14992">
        <id>P40348</id>
    </interactant>
    <interactant intactId="EBI-32195">
        <id>Q12050</id>
        <label>ELG1</label>
    </interactant>
    <organismsDiffer>false</organismsDiffer>
    <experiments>3</experiments>
</comment>
<comment type="interaction">
    <interactant intactId="EBI-14992">
        <id>P40348</id>
    </interactant>
    <interactant intactId="EBI-14675">
        <id>P32641</id>
        <label>RAD24</label>
    </interactant>
    <organismsDiffer>false</organismsDiffer>
    <experiments>6</experiments>
</comment>
<comment type="interaction">
    <interactant intactId="EBI-14992">
        <id>P40348</id>
    </interactant>
    <interactant intactId="EBI-15000">
        <id>P38629</id>
        <label>RFC3</label>
    </interactant>
    <organismsDiffer>false</organismsDiffer>
    <experiments>5</experiments>
</comment>
<comment type="interaction">
    <interactant intactId="EBI-14992">
        <id>P40348</id>
    </interactant>
    <interactant intactId="EBI-15016">
        <id>P38251</id>
        <label>RFC5</label>
    </interactant>
    <organismsDiffer>false</organismsDiffer>
    <experiments>3</experiments>
</comment>
<comment type="subcellular location">
    <subcellularLocation>
        <location evidence="11">Nucleus</location>
    </subcellularLocation>
</comment>
<comment type="miscellaneous">
    <text evidence="7">Present with 4610 molecules/cell in log phase SD medium.</text>
</comment>
<comment type="similarity">
    <text evidence="11">Belongs to the activator 1 small subunits family.</text>
</comment>
<accession>P40348</accession>
<accession>D6VWN9</accession>
<accession>E9P8U1</accession>
<evidence type="ECO:0000269" key="1">
    <source>
    </source>
</evidence>
<evidence type="ECO:0000269" key="2">
    <source>
    </source>
</evidence>
<evidence type="ECO:0000269" key="3">
    <source>
    </source>
</evidence>
<evidence type="ECO:0000269" key="4">
    <source>
    </source>
</evidence>
<evidence type="ECO:0000269" key="5">
    <source>
    </source>
</evidence>
<evidence type="ECO:0000269" key="6">
    <source>
    </source>
</evidence>
<evidence type="ECO:0000269" key="7">
    <source>
    </source>
</evidence>
<evidence type="ECO:0000269" key="8">
    <source>
    </source>
</evidence>
<evidence type="ECO:0000269" key="9">
    <source>
    </source>
</evidence>
<evidence type="ECO:0000269" key="10">
    <source>
    </source>
</evidence>
<evidence type="ECO:0000305" key="11"/>
<evidence type="ECO:0007744" key="12">
    <source>
    </source>
</evidence>
<evidence type="ECO:0007829" key="13">
    <source>
        <dbReference type="PDB" id="1SXJ"/>
    </source>
</evidence>
<evidence type="ECO:0007829" key="14">
    <source>
        <dbReference type="PDB" id="7SGZ"/>
    </source>
</evidence>
<evidence type="ECO:0007829" key="15">
    <source>
        <dbReference type="PDB" id="8DQW"/>
    </source>
</evidence>
<evidence type="ECO:0007829" key="16">
    <source>
        <dbReference type="PDB" id="8DR6"/>
    </source>
</evidence>
<evidence type="ECO:0007829" key="17">
    <source>
        <dbReference type="PDB" id="8THB"/>
    </source>
</evidence>
<name>RFC2_YEAST</name>
<reference key="1">
    <citation type="journal article" date="1994" name="Nucleic Acids Res.">
        <title>The RFC2 gene encoding a subunit of replication factor C of Saccharomyces cerevisiae.</title>
        <authorList>
            <person name="Noskov V."/>
            <person name="Maki S."/>
            <person name="Kawasaki Y."/>
            <person name="Leem S.-H."/>
            <person name="Ono B."/>
            <person name="Araki H."/>
            <person name="Pavlov Y."/>
            <person name="Sugino A."/>
        </authorList>
    </citation>
    <scope>NUCLEOTIDE SEQUENCE [GENOMIC DNA]</scope>
    <source>
        <strain>ATCC 204508 / S288c</strain>
    </source>
</reference>
<reference key="2">
    <citation type="journal article" date="1995" name="Mol. Cell. Biol.">
        <title>Characterization of the five replication factor C genes of Saccharomyces cerevisiae.</title>
        <authorList>
            <person name="Cullmann G."/>
            <person name="Fien K."/>
            <person name="Kobayashi R."/>
            <person name="Stillman B."/>
        </authorList>
    </citation>
    <scope>NUCLEOTIDE SEQUENCE [GENOMIC DNA]</scope>
    <scope>IDENTIFICATION IN THE RFC COMPLEX</scope>
    <source>
        <strain>ATCC 204508 / S288c</strain>
    </source>
</reference>
<reference key="3">
    <citation type="journal article" date="1996" name="Yeast">
        <title>Analysis of a 62 kb DNA sequence of chromosome X reveals 36 open reading frames and a gene cluster with a counterpart on chromosome XI.</title>
        <authorList>
            <person name="Huang M.-E."/>
            <person name="Manus V."/>
            <person name="Chuat J.-C."/>
            <person name="Galibert F."/>
        </authorList>
    </citation>
    <scope>NUCLEOTIDE SEQUENCE [GENOMIC DNA]</scope>
    <source>
        <strain>ATCC 204508 / S288c</strain>
    </source>
</reference>
<reference key="4">
    <citation type="journal article" date="1996" name="EMBO J.">
        <title>Complete nucleotide sequence of Saccharomyces cerevisiae chromosome X.</title>
        <authorList>
            <person name="Galibert F."/>
            <person name="Alexandraki D."/>
            <person name="Baur A."/>
            <person name="Boles E."/>
            <person name="Chalwatzis N."/>
            <person name="Chuat J.-C."/>
            <person name="Coster F."/>
            <person name="Cziepluch C."/>
            <person name="de Haan M."/>
            <person name="Domdey H."/>
            <person name="Durand P."/>
            <person name="Entian K.-D."/>
            <person name="Gatius M."/>
            <person name="Goffeau A."/>
            <person name="Grivell L.A."/>
            <person name="Hennemann A."/>
            <person name="Herbert C.J."/>
            <person name="Heumann K."/>
            <person name="Hilger F."/>
            <person name="Hollenberg C.P."/>
            <person name="Huang M.-E."/>
            <person name="Jacq C."/>
            <person name="Jauniaux J.-C."/>
            <person name="Katsoulou C."/>
            <person name="Kirchrath L."/>
            <person name="Kleine K."/>
            <person name="Kordes E."/>
            <person name="Koetter P."/>
            <person name="Liebl S."/>
            <person name="Louis E.J."/>
            <person name="Manus V."/>
            <person name="Mewes H.-W."/>
            <person name="Miosga T."/>
            <person name="Obermaier B."/>
            <person name="Perea J."/>
            <person name="Pohl T.M."/>
            <person name="Portetelle D."/>
            <person name="Pujol A."/>
            <person name="Purnelle B."/>
            <person name="Ramezani Rad M."/>
            <person name="Rasmussen S.W."/>
            <person name="Rose M."/>
            <person name="Rossau R."/>
            <person name="Schaaff-Gerstenschlaeger I."/>
            <person name="Smits P.H.M."/>
            <person name="Scarcez T."/>
            <person name="Soriano N."/>
            <person name="To Van D."/>
            <person name="Tzermia M."/>
            <person name="Van Broekhoven A."/>
            <person name="Vandenbol M."/>
            <person name="Wedler H."/>
            <person name="von Wettstein D."/>
            <person name="Wambutt R."/>
            <person name="Zagulski M."/>
            <person name="Zollner A."/>
            <person name="Karpfinger-Hartl L."/>
        </authorList>
    </citation>
    <scope>NUCLEOTIDE SEQUENCE [LARGE SCALE GENOMIC DNA]</scope>
    <source>
        <strain>ATCC 204508 / S288c</strain>
    </source>
</reference>
<reference key="5">
    <citation type="journal article" date="2014" name="G3 (Bethesda)">
        <title>The reference genome sequence of Saccharomyces cerevisiae: Then and now.</title>
        <authorList>
            <person name="Engel S.R."/>
            <person name="Dietrich F.S."/>
            <person name="Fisk D.G."/>
            <person name="Binkley G."/>
            <person name="Balakrishnan R."/>
            <person name="Costanzo M.C."/>
            <person name="Dwight S.S."/>
            <person name="Hitz B.C."/>
            <person name="Karra K."/>
            <person name="Nash R.S."/>
            <person name="Weng S."/>
            <person name="Wong E.D."/>
            <person name="Lloyd P."/>
            <person name="Skrzypek M.S."/>
            <person name="Miyasato S.R."/>
            <person name="Simison M."/>
            <person name="Cherry J.M."/>
        </authorList>
    </citation>
    <scope>GENOME REANNOTATION</scope>
    <source>
        <strain>ATCC 204508 / S288c</strain>
    </source>
</reference>
<reference key="6">
    <citation type="journal article" date="2007" name="Genome Res.">
        <title>Approaching a complete repository of sequence-verified protein-encoding clones for Saccharomyces cerevisiae.</title>
        <authorList>
            <person name="Hu Y."/>
            <person name="Rolfs A."/>
            <person name="Bhullar B."/>
            <person name="Murthy T.V.S."/>
            <person name="Zhu C."/>
            <person name="Berger M.F."/>
            <person name="Camargo A.A."/>
            <person name="Kelley F."/>
            <person name="McCarron S."/>
            <person name="Jepson D."/>
            <person name="Richardson A."/>
            <person name="Raphael J."/>
            <person name="Moreira D."/>
            <person name="Taycher E."/>
            <person name="Zuo D."/>
            <person name="Mohr S."/>
            <person name="Kane M.F."/>
            <person name="Williamson J."/>
            <person name="Simpson A.J.G."/>
            <person name="Bulyk M.L."/>
            <person name="Harlow E."/>
            <person name="Marsischky G."/>
            <person name="Kolodner R.D."/>
            <person name="LaBaer J."/>
        </authorList>
    </citation>
    <scope>NUCLEOTIDE SEQUENCE [GENOMIC DNA]</scope>
    <source>
        <strain>ATCC 204508 / S288c</strain>
    </source>
</reference>
<reference key="7">
    <citation type="journal article" date="2000" name="Curr. Biol.">
        <title>A novel Rad24 checkpoint protein complex closely related to replication factor C.</title>
        <authorList>
            <person name="Green C.M."/>
            <person name="Erdjument-Bromage H."/>
            <person name="Tempst P."/>
            <person name="Lowndes N.F."/>
        </authorList>
    </citation>
    <scope>INTERACTION WITH RAD24</scope>
    <scope>IDENTIFICATION IN THE RAD24-RFC COMPLEX</scope>
</reference>
<reference key="8">
    <citation type="journal article" date="2001" name="Mol. Cell">
        <title>Identification of RFC(Ctf18p, Ctf8p, Dcc1p): an alternative RFC complex required for sister chromatid cohesion in S. cerevisiae.</title>
        <authorList>
            <person name="Mayer M.L."/>
            <person name="Gygi S.P."/>
            <person name="Aebersold R."/>
            <person name="Hieter P."/>
        </authorList>
    </citation>
    <scope>IDENTIFICATION IN THE CTF18-RFC COMPLEX</scope>
</reference>
<reference key="9">
    <citation type="journal article" date="2001" name="Mol. Cell. Biol.">
        <title>Chl12 (Ctf18) forms a novel replication factor C-related complex and functions redundantly with Rad24 in the DNA replication checkpoint pathway.</title>
        <authorList>
            <person name="Naiki T."/>
            <person name="Kondo T."/>
            <person name="Nakada D."/>
            <person name="Matsumoto K."/>
            <person name="Sugimoto K."/>
        </authorList>
    </citation>
    <scope>FUNCTION</scope>
    <scope>INTERACTION WITH CTF18</scope>
</reference>
<reference key="10">
    <citation type="journal article" date="2003" name="EMBO J.">
        <title>Elg1 forms an alternative RFC complex important for DNA replication and genome integrity.</title>
        <authorList>
            <person name="Bellaoui M."/>
            <person name="Chang M."/>
            <person name="Ou J."/>
            <person name="Xu H."/>
            <person name="Boone C."/>
            <person name="Brown G.W."/>
        </authorList>
    </citation>
    <scope>INTERACTION WITH ELG1</scope>
</reference>
<reference key="11">
    <citation type="journal article" date="2003" name="Mol. Cell. Biol.">
        <title>Mechanical link between cohesion establishment and DNA replication: Ctf7p/Eco1p, a cohesion establishment factor, associates with three different replication factor C complexes.</title>
        <authorList>
            <person name="Kenna M.A."/>
            <person name="Skibbens R.V."/>
        </authorList>
    </citation>
    <scope>INTERACTION WITH ECO1</scope>
</reference>
<reference key="12">
    <citation type="journal article" date="2003" name="Nature">
        <title>Global analysis of protein expression in yeast.</title>
        <authorList>
            <person name="Ghaemmaghami S."/>
            <person name="Huh W.-K."/>
            <person name="Bower K."/>
            <person name="Howson R.W."/>
            <person name="Belle A."/>
            <person name="Dephoure N."/>
            <person name="O'Shea E.K."/>
            <person name="Weissman J.S."/>
        </authorList>
    </citation>
    <scope>LEVEL OF PROTEIN EXPRESSION [LARGE SCALE ANALYSIS]</scope>
</reference>
<reference key="13">
    <citation type="journal article" date="2003" name="Proc. Natl. Acad. Sci. U.S.A.">
        <title>Yeast Rad17/Mec3/Ddc1: a sliding clamp for the DNA damage checkpoint.</title>
        <authorList>
            <person name="Majka J."/>
            <person name="Burgers P.M.J."/>
        </authorList>
    </citation>
    <scope>IDENTIFICATION IN THE RAD24-RFC COMPLEX</scope>
    <scope>FUNCTION OF THE RAD24-RFC COMPLEX</scope>
</reference>
<reference key="14">
    <citation type="journal article" date="2005" name="Mol. Cell. Biol.">
        <title>Replication protein A-directed unloading of PCNA by the Ctf18 cohesion establishment complex.</title>
        <authorList>
            <person name="Bylund G.O."/>
            <person name="Burgers P.M."/>
        </authorList>
    </citation>
    <scope>IDENTIFICATION IN THE RFC COMPLEX</scope>
    <scope>IDENTIFICATION IN THE RAD24-RFC COMPLEX</scope>
    <scope>IDENTIFICATION IN THE ELG1-RFC COMPLEX</scope>
    <scope>IDENTIFICATION IN THE CTF18-RFC COMPLEX</scope>
    <scope>FUNCTION OF THE CTF18-RFC COMPLEX</scope>
</reference>
<reference key="15">
    <citation type="journal article" date="2012" name="Proc. Natl. Acad. Sci. U.S.A.">
        <title>N-terminal acetylome analyses and functional insights of the N-terminal acetyltransferase NatB.</title>
        <authorList>
            <person name="Van Damme P."/>
            <person name="Lasa M."/>
            <person name="Polevoda B."/>
            <person name="Gazquez C."/>
            <person name="Elosegui-Artola A."/>
            <person name="Kim D.S."/>
            <person name="De Juan-Pardo E."/>
            <person name="Demeyer K."/>
            <person name="Hole K."/>
            <person name="Larrea E."/>
            <person name="Timmerman E."/>
            <person name="Prieto J."/>
            <person name="Arnesen T."/>
            <person name="Sherman F."/>
            <person name="Gevaert K."/>
            <person name="Aldabe R."/>
        </authorList>
    </citation>
    <scope>ACETYLATION [LARGE SCALE ANALYSIS] AT MET-1</scope>
    <scope>IDENTIFICATION BY MASS SPECTROMETRY [LARGE SCALE ANALYSIS]</scope>
</reference>
<reference key="16">
    <citation type="journal article" date="2004" name="Nature">
        <title>Structural analysis of a eukaryotic sliding DNA clamp-clamp loader complex.</title>
        <authorList>
            <person name="Bowman G.D."/>
            <person name="O'Donnell M."/>
            <person name="Kuriyan J."/>
        </authorList>
    </citation>
    <scope>X-RAY CRYSTALLOGRAPHY (2.85 ANGSTROMS) IN COMPLEX WITH AN ATP ANALOG; RCF1; RCF3; RCF4; RCF5 AND PCNA</scope>
</reference>
<dbReference type="EMBL" id="D28499">
    <property type="protein sequence ID" value="BAA05858.1"/>
    <property type="molecule type" value="Genomic_DNA"/>
</dbReference>
<dbReference type="EMBL" id="U26028">
    <property type="protein sequence ID" value="AAC49061.1"/>
    <property type="molecule type" value="Genomic_DNA"/>
</dbReference>
<dbReference type="EMBL" id="Z49568">
    <property type="protein sequence ID" value="CAA89596.1"/>
    <property type="molecule type" value="Genomic_DNA"/>
</dbReference>
<dbReference type="EMBL" id="L47993">
    <property type="protein sequence ID" value="AAB39294.1"/>
    <property type="molecule type" value="Genomic_DNA"/>
</dbReference>
<dbReference type="EMBL" id="AY557920">
    <property type="protein sequence ID" value="AAS56246.1"/>
    <property type="molecule type" value="Genomic_DNA"/>
</dbReference>
<dbReference type="EMBL" id="BK006943">
    <property type="protein sequence ID" value="DAA08855.1"/>
    <property type="molecule type" value="Genomic_DNA"/>
</dbReference>
<dbReference type="PIR" id="S45531">
    <property type="entry name" value="S45531"/>
</dbReference>
<dbReference type="RefSeq" id="NP_012602.3">
    <property type="nucleotide sequence ID" value="NM_001181726.3"/>
</dbReference>
<dbReference type="PDB" id="1SXJ">
    <property type="method" value="X-ray"/>
    <property type="resolution" value="2.85 A"/>
    <property type="chains" value="D=1-353"/>
</dbReference>
<dbReference type="PDB" id="7SGZ">
    <property type="method" value="EM"/>
    <property type="resolution" value="3.17 A"/>
    <property type="chains" value="D=1-353"/>
</dbReference>
<dbReference type="PDB" id="7SH2">
    <property type="method" value="EM"/>
    <property type="resolution" value="3.23 A"/>
    <property type="chains" value="D=1-353"/>
</dbReference>
<dbReference type="PDB" id="7ST9">
    <property type="method" value="EM"/>
    <property type="resolution" value="2.20 A"/>
    <property type="chains" value="D=1-353"/>
</dbReference>
<dbReference type="PDB" id="7STB">
    <property type="method" value="EM"/>
    <property type="resolution" value="2.72 A"/>
    <property type="chains" value="D=1-353"/>
</dbReference>
<dbReference type="PDB" id="7STE">
    <property type="method" value="EM"/>
    <property type="resolution" value="2.73 A"/>
    <property type="chains" value="D=1-353"/>
</dbReference>
<dbReference type="PDB" id="7TFH">
    <property type="method" value="EM"/>
    <property type="resolution" value="3.09 A"/>
    <property type="chains" value="D=1-353"/>
</dbReference>
<dbReference type="PDB" id="7TFI">
    <property type="method" value="EM"/>
    <property type="resolution" value="3.41 A"/>
    <property type="chains" value="D=1-353"/>
</dbReference>
<dbReference type="PDB" id="7TFJ">
    <property type="method" value="EM"/>
    <property type="resolution" value="3.30 A"/>
    <property type="chains" value="D=1-353"/>
</dbReference>
<dbReference type="PDB" id="7TFK">
    <property type="method" value="EM"/>
    <property type="resolution" value="3.25 A"/>
    <property type="chains" value="D=1-353"/>
</dbReference>
<dbReference type="PDB" id="7TFL">
    <property type="method" value="EM"/>
    <property type="resolution" value="3.33 A"/>
    <property type="chains" value="D=1-353"/>
</dbReference>
<dbReference type="PDB" id="7THJ">
    <property type="method" value="EM"/>
    <property type="resolution" value="3.80 A"/>
    <property type="chains" value="D=1-353"/>
</dbReference>
<dbReference type="PDB" id="7THV">
    <property type="method" value="EM"/>
    <property type="resolution" value="4.00 A"/>
    <property type="chains" value="D=1-353"/>
</dbReference>
<dbReference type="PDB" id="7TI8">
    <property type="method" value="EM"/>
    <property type="resolution" value="3.50 A"/>
    <property type="chains" value="D=1-353"/>
</dbReference>
<dbReference type="PDB" id="7TIB">
    <property type="method" value="EM"/>
    <property type="resolution" value="3.40 A"/>
    <property type="chains" value="D=1-353"/>
</dbReference>
<dbReference type="PDB" id="7TIC">
    <property type="method" value="EM"/>
    <property type="resolution" value="3.90 A"/>
    <property type="chains" value="D=1-353"/>
</dbReference>
<dbReference type="PDB" id="7TID">
    <property type="method" value="EM"/>
    <property type="resolution" value="3.30 A"/>
    <property type="chains" value="D=1-353"/>
</dbReference>
<dbReference type="PDB" id="7TKU">
    <property type="method" value="EM"/>
    <property type="resolution" value="4.00 A"/>
    <property type="chains" value="D=1-353"/>
</dbReference>
<dbReference type="PDB" id="7U19">
    <property type="method" value="EM"/>
    <property type="resolution" value="3.70 A"/>
    <property type="chains" value="D=1-353"/>
</dbReference>
<dbReference type="PDB" id="7U1A">
    <property type="method" value="EM"/>
    <property type="resolution" value="3.30 A"/>
    <property type="chains" value="D=1-353"/>
</dbReference>
<dbReference type="PDB" id="7U1P">
    <property type="method" value="EM"/>
    <property type="resolution" value="3.00 A"/>
    <property type="chains" value="D=1-353"/>
</dbReference>
<dbReference type="PDB" id="8DQW">
    <property type="method" value="EM"/>
    <property type="resolution" value="2.10 A"/>
    <property type="chains" value="D=1-353"/>
</dbReference>
<dbReference type="PDB" id="8DQX">
    <property type="method" value="EM"/>
    <property type="resolution" value="2.10 A"/>
    <property type="chains" value="D=1-353"/>
</dbReference>
<dbReference type="PDB" id="8DQZ">
    <property type="method" value="EM"/>
    <property type="resolution" value="2.92 A"/>
    <property type="chains" value="D=1-353"/>
</dbReference>
<dbReference type="PDB" id="8DR0">
    <property type="method" value="EM"/>
    <property type="resolution" value="2.42 A"/>
    <property type="chains" value="D=1-353"/>
</dbReference>
<dbReference type="PDB" id="8DR1">
    <property type="method" value="EM"/>
    <property type="resolution" value="2.14 A"/>
    <property type="chains" value="D=1-353"/>
</dbReference>
<dbReference type="PDB" id="8DR3">
    <property type="method" value="EM"/>
    <property type="resolution" value="2.20 A"/>
    <property type="chains" value="D=1-353"/>
</dbReference>
<dbReference type="PDB" id="8DR4">
    <property type="method" value="EM"/>
    <property type="resolution" value="2.45 A"/>
    <property type="chains" value="D=1-353"/>
</dbReference>
<dbReference type="PDB" id="8DR5">
    <property type="method" value="EM"/>
    <property type="resolution" value="2.76 A"/>
    <property type="chains" value="D=1-353"/>
</dbReference>
<dbReference type="PDB" id="8DR6">
    <property type="method" value="EM"/>
    <property type="resolution" value="2.39 A"/>
    <property type="chains" value="D=1-353"/>
</dbReference>
<dbReference type="PDB" id="8DR7">
    <property type="method" value="EM"/>
    <property type="resolution" value="2.70 A"/>
    <property type="chains" value="D=1-353"/>
</dbReference>
<dbReference type="PDB" id="8FS3">
    <property type="method" value="EM"/>
    <property type="resolution" value="2.93 A"/>
    <property type="chains" value="D=1-353"/>
</dbReference>
<dbReference type="PDB" id="8FS4">
    <property type="method" value="EM"/>
    <property type="resolution" value="2.94 A"/>
    <property type="chains" value="D=1-353"/>
</dbReference>
<dbReference type="PDB" id="8FS5">
    <property type="method" value="EM"/>
    <property type="resolution" value="2.76 A"/>
    <property type="chains" value="D=1-353"/>
</dbReference>
<dbReference type="PDB" id="8FS6">
    <property type="method" value="EM"/>
    <property type="resolution" value="2.90 A"/>
    <property type="chains" value="D=1-353"/>
</dbReference>
<dbReference type="PDB" id="8FS7">
    <property type="method" value="EM"/>
    <property type="resolution" value="2.85 A"/>
    <property type="chains" value="D=1-353"/>
</dbReference>
<dbReference type="PDB" id="8FS8">
    <property type="method" value="EM"/>
    <property type="resolution" value="3.04 A"/>
    <property type="chains" value="D=1-353"/>
</dbReference>
<dbReference type="PDB" id="8THB">
    <property type="method" value="EM"/>
    <property type="resolution" value="3.20 A"/>
    <property type="chains" value="D=1-353"/>
</dbReference>
<dbReference type="PDB" id="8THC">
    <property type="method" value="EM"/>
    <property type="resolution" value="3.67 A"/>
    <property type="chains" value="D=1-353"/>
</dbReference>
<dbReference type="PDB" id="8THD">
    <property type="method" value="EM"/>
    <property type="resolution" value="3.25 A"/>
    <property type="chains" value="D=1-353"/>
</dbReference>
<dbReference type="PDB" id="8TW7">
    <property type="method" value="EM"/>
    <property type="resolution" value="3.80 A"/>
    <property type="chains" value="2=14-353"/>
</dbReference>
<dbReference type="PDB" id="8TW8">
    <property type="method" value="EM"/>
    <property type="resolution" value="3.50 A"/>
    <property type="chains" value="2=14-353"/>
</dbReference>
<dbReference type="PDB" id="8TWA">
    <property type="method" value="EM"/>
    <property type="resolution" value="4.10 A"/>
    <property type="chains" value="2=14-353"/>
</dbReference>
<dbReference type="PDB" id="8TWB">
    <property type="method" value="EM"/>
    <property type="resolution" value="3.20 A"/>
    <property type="chains" value="2=14-353"/>
</dbReference>
<dbReference type="PDBsum" id="1SXJ"/>
<dbReference type="PDBsum" id="7SGZ"/>
<dbReference type="PDBsum" id="7SH2"/>
<dbReference type="PDBsum" id="7ST9"/>
<dbReference type="PDBsum" id="7STB"/>
<dbReference type="PDBsum" id="7STE"/>
<dbReference type="PDBsum" id="7TFH"/>
<dbReference type="PDBsum" id="7TFI"/>
<dbReference type="PDBsum" id="7TFJ"/>
<dbReference type="PDBsum" id="7TFK"/>
<dbReference type="PDBsum" id="7TFL"/>
<dbReference type="PDBsum" id="7THJ"/>
<dbReference type="PDBsum" id="7THV"/>
<dbReference type="PDBsum" id="7TI8"/>
<dbReference type="PDBsum" id="7TIB"/>
<dbReference type="PDBsum" id="7TIC"/>
<dbReference type="PDBsum" id="7TID"/>
<dbReference type="PDBsum" id="7TKU"/>
<dbReference type="PDBsum" id="7U19"/>
<dbReference type="PDBsum" id="7U1A"/>
<dbReference type="PDBsum" id="7U1P"/>
<dbReference type="PDBsum" id="8DQW"/>
<dbReference type="PDBsum" id="8DQX"/>
<dbReference type="PDBsum" id="8DQZ"/>
<dbReference type="PDBsum" id="8DR0"/>
<dbReference type="PDBsum" id="8DR1"/>
<dbReference type="PDBsum" id="8DR3"/>
<dbReference type="PDBsum" id="8DR4"/>
<dbReference type="PDBsum" id="8DR5"/>
<dbReference type="PDBsum" id="8DR6"/>
<dbReference type="PDBsum" id="8DR7"/>
<dbReference type="PDBsum" id="8FS3"/>
<dbReference type="PDBsum" id="8FS4"/>
<dbReference type="PDBsum" id="8FS5"/>
<dbReference type="PDBsum" id="8FS6"/>
<dbReference type="PDBsum" id="8FS7"/>
<dbReference type="PDBsum" id="8FS8"/>
<dbReference type="PDBsum" id="8THB"/>
<dbReference type="PDBsum" id="8THC"/>
<dbReference type="PDBsum" id="8THD"/>
<dbReference type="PDBsum" id="8TW7"/>
<dbReference type="PDBsum" id="8TW8"/>
<dbReference type="PDBsum" id="8TWA"/>
<dbReference type="PDBsum" id="8TWB"/>
<dbReference type="EMDB" id="EMD-25121"/>
<dbReference type="EMDB" id="EMD-25122"/>
<dbReference type="EMDB" id="EMD-25422"/>
<dbReference type="EMDB" id="EMD-25423"/>
<dbReference type="EMDB" id="EMD-25426"/>
<dbReference type="EMDB" id="EMD-25568"/>
<dbReference type="EMDB" id="EMD-25569"/>
<dbReference type="EMDB" id="EMD-25614"/>
<dbReference type="EMDB" id="EMD-25615"/>
<dbReference type="EMDB" id="EMD-25616"/>
<dbReference type="EMDB" id="EMD-25617"/>
<dbReference type="EMDB" id="EMD-25753"/>
<dbReference type="EMDB" id="EMD-25872"/>
<dbReference type="EMDB" id="EMD-25873"/>
<dbReference type="EMDB" id="EMD-25874"/>
<dbReference type="EMDB" id="EMD-25875"/>
<dbReference type="EMDB" id="EMD-25876"/>
<dbReference type="EMDB" id="EMD-26297"/>
<dbReference type="EMDB" id="EMD-26298"/>
<dbReference type="EMDB" id="EMD-26302"/>
<dbReference type="EMDB" id="EMD-27662"/>
<dbReference type="EMDB" id="EMD-27663"/>
<dbReference type="EMDB" id="EMD-27666"/>
<dbReference type="EMDB" id="EMD-27667"/>
<dbReference type="EMDB" id="EMD-27668"/>
<dbReference type="EMDB" id="EMD-27669"/>
<dbReference type="EMDB" id="EMD-27670"/>
<dbReference type="EMDB" id="EMD-27671"/>
<dbReference type="EMDB" id="EMD-27672"/>
<dbReference type="EMDB" id="EMD-27673"/>
<dbReference type="EMDB" id="EMD-29412"/>
<dbReference type="EMDB" id="EMD-29413"/>
<dbReference type="EMDB" id="EMD-29414"/>
<dbReference type="EMDB" id="EMD-29415"/>
<dbReference type="EMDB" id="EMD-29416"/>
<dbReference type="EMDB" id="EMD-29417"/>
<dbReference type="EMDB" id="EMD-41252"/>
<dbReference type="EMDB" id="EMD-41253"/>
<dbReference type="EMDB" id="EMD-41254"/>
<dbReference type="EMDB" id="EMD-41661"/>
<dbReference type="EMDB" id="EMD-41662"/>
<dbReference type="EMDB" id="EMD-41664"/>
<dbReference type="EMDB" id="EMD-41665"/>
<dbReference type="SMR" id="P40348"/>
<dbReference type="BioGRID" id="33825">
    <property type="interactions" value="379"/>
</dbReference>
<dbReference type="ComplexPortal" id="CPX-1731">
    <property type="entry name" value="CTF18-RFC complex"/>
</dbReference>
<dbReference type="ComplexPortal" id="CPX-1807">
    <property type="entry name" value="Rad17 RFC-like complex"/>
</dbReference>
<dbReference type="ComplexPortal" id="CPX-422">
    <property type="entry name" value="ELG1-RFC complex"/>
</dbReference>
<dbReference type="ComplexPortal" id="CPX-545">
    <property type="entry name" value="DNA replication factor C complex"/>
</dbReference>
<dbReference type="DIP" id="DIP-2528N"/>
<dbReference type="FunCoup" id="P40348">
    <property type="interactions" value="742"/>
</dbReference>
<dbReference type="IntAct" id="P40348">
    <property type="interactions" value="60"/>
</dbReference>
<dbReference type="MINT" id="P40348"/>
<dbReference type="STRING" id="4932.YJR068W"/>
<dbReference type="iPTMnet" id="P40348"/>
<dbReference type="PaxDb" id="4932-YJR068W"/>
<dbReference type="PeptideAtlas" id="P40348"/>
<dbReference type="EnsemblFungi" id="YJR068W_mRNA">
    <property type="protein sequence ID" value="YJR068W"/>
    <property type="gene ID" value="YJR068W"/>
</dbReference>
<dbReference type="GeneID" id="853531"/>
<dbReference type="KEGG" id="sce:YJR068W"/>
<dbReference type="AGR" id="SGD:S000003829"/>
<dbReference type="SGD" id="S000003829">
    <property type="gene designation" value="RFC2"/>
</dbReference>
<dbReference type="VEuPathDB" id="FungiDB:YJR068W"/>
<dbReference type="eggNOG" id="KOG0989">
    <property type="taxonomic scope" value="Eukaryota"/>
</dbReference>
<dbReference type="GeneTree" id="ENSGT00550000074917"/>
<dbReference type="HOGENOM" id="CLU_042324_1_0_1"/>
<dbReference type="InParanoid" id="P40348"/>
<dbReference type="OMA" id="GATKYIQ"/>
<dbReference type="OrthoDB" id="4199794at2759"/>
<dbReference type="BioCyc" id="YEAST:G3O-31701-MONOMER"/>
<dbReference type="Reactome" id="R-SCE-110312">
    <property type="pathway name" value="Translesion synthesis by REV1"/>
</dbReference>
<dbReference type="Reactome" id="R-SCE-110320">
    <property type="pathway name" value="Translesion Synthesis by POLH"/>
</dbReference>
<dbReference type="Reactome" id="R-SCE-176187">
    <property type="pathway name" value="Activation of ATR in response to replication stress"/>
</dbReference>
<dbReference type="Reactome" id="R-SCE-5655862">
    <property type="pathway name" value="Translesion synthesis by POLK"/>
</dbReference>
<dbReference type="Reactome" id="R-SCE-5656121">
    <property type="pathway name" value="Translesion synthesis by POLI"/>
</dbReference>
<dbReference type="Reactome" id="R-SCE-5656169">
    <property type="pathway name" value="Termination of translesion DNA synthesis"/>
</dbReference>
<dbReference type="Reactome" id="R-SCE-5696397">
    <property type="pathway name" value="Gap-filling DNA repair synthesis and ligation in GG-NER"/>
</dbReference>
<dbReference type="Reactome" id="R-SCE-6782135">
    <property type="pathway name" value="Dual incision in TC-NER"/>
</dbReference>
<dbReference type="Reactome" id="R-SCE-6782210">
    <property type="pathway name" value="Gap-filling DNA repair synthesis and ligation in TC-NER"/>
</dbReference>
<dbReference type="Reactome" id="R-SCE-69091">
    <property type="pathway name" value="Polymerase switching"/>
</dbReference>
<dbReference type="BioGRID-ORCS" id="853531">
    <property type="hits" value="2 hits in 10 CRISPR screens"/>
</dbReference>
<dbReference type="EvolutionaryTrace" id="P40348"/>
<dbReference type="PRO" id="PR:P40348"/>
<dbReference type="Proteomes" id="UP000002311">
    <property type="component" value="Chromosome X"/>
</dbReference>
<dbReference type="RNAct" id="P40348">
    <property type="molecule type" value="protein"/>
</dbReference>
<dbReference type="GO" id="GO:0031390">
    <property type="term" value="C:Ctf18 RFC-like complex"/>
    <property type="evidence" value="ECO:0000353"/>
    <property type="project" value="ComplexPortal"/>
</dbReference>
<dbReference type="GO" id="GO:0005663">
    <property type="term" value="C:DNA replication factor C complex"/>
    <property type="evidence" value="ECO:0000314"/>
    <property type="project" value="SGD"/>
</dbReference>
<dbReference type="GO" id="GO:0031391">
    <property type="term" value="C:Elg1 RFC-like complex"/>
    <property type="evidence" value="ECO:0000353"/>
    <property type="project" value="SGD"/>
</dbReference>
<dbReference type="GO" id="GO:0005634">
    <property type="term" value="C:nucleus"/>
    <property type="evidence" value="ECO:0000314"/>
    <property type="project" value="SGD"/>
</dbReference>
<dbReference type="GO" id="GO:0031389">
    <property type="term" value="C:Rad17 RFC-like complex"/>
    <property type="evidence" value="ECO:0000314"/>
    <property type="project" value="SGD"/>
</dbReference>
<dbReference type="GO" id="GO:0005524">
    <property type="term" value="F:ATP binding"/>
    <property type="evidence" value="ECO:0007669"/>
    <property type="project" value="UniProtKB-KW"/>
</dbReference>
<dbReference type="GO" id="GO:0016887">
    <property type="term" value="F:ATP hydrolysis activity"/>
    <property type="evidence" value="ECO:0007669"/>
    <property type="project" value="InterPro"/>
</dbReference>
<dbReference type="GO" id="GO:0003677">
    <property type="term" value="F:DNA binding"/>
    <property type="evidence" value="ECO:0007669"/>
    <property type="project" value="UniProtKB-KW"/>
</dbReference>
<dbReference type="GO" id="GO:0000077">
    <property type="term" value="P:DNA damage checkpoint signaling"/>
    <property type="evidence" value="ECO:0000303"/>
    <property type="project" value="ComplexPortal"/>
</dbReference>
<dbReference type="GO" id="GO:0006281">
    <property type="term" value="P:DNA repair"/>
    <property type="evidence" value="ECO:0000318"/>
    <property type="project" value="GO_Central"/>
</dbReference>
<dbReference type="GO" id="GO:0000076">
    <property type="term" value="P:DNA replication checkpoint signaling"/>
    <property type="evidence" value="ECO:0000315"/>
    <property type="project" value="SGD"/>
</dbReference>
<dbReference type="GO" id="GO:0006261">
    <property type="term" value="P:DNA-templated DNA replication"/>
    <property type="evidence" value="ECO:0000314"/>
    <property type="project" value="ComplexPortal"/>
</dbReference>
<dbReference type="GO" id="GO:0006272">
    <property type="term" value="P:leading strand elongation"/>
    <property type="evidence" value="ECO:0000314"/>
    <property type="project" value="SGD"/>
</dbReference>
<dbReference type="GO" id="GO:0006298">
    <property type="term" value="P:mismatch repair"/>
    <property type="evidence" value="ECO:0000304"/>
    <property type="project" value="SGD"/>
</dbReference>
<dbReference type="GO" id="GO:0007064">
    <property type="term" value="P:mitotic sister chromatid cohesion"/>
    <property type="evidence" value="ECO:0000303"/>
    <property type="project" value="ComplexPortal"/>
</dbReference>
<dbReference type="GO" id="GO:0007062">
    <property type="term" value="P:sister chromatid cohesion"/>
    <property type="evidence" value="ECO:0000353"/>
    <property type="project" value="SGD"/>
</dbReference>
<dbReference type="CDD" id="cd00009">
    <property type="entry name" value="AAA"/>
    <property type="match status" value="1"/>
</dbReference>
<dbReference type="CDD" id="cd18140">
    <property type="entry name" value="HLD_clamp_RFC"/>
    <property type="match status" value="1"/>
</dbReference>
<dbReference type="FunFam" id="1.20.272.10:FF:000011">
    <property type="entry name" value="Replication factor C subunit 2"/>
    <property type="match status" value="1"/>
</dbReference>
<dbReference type="FunFam" id="1.10.8.60:FF:000032">
    <property type="entry name" value="Replication factor C subunit 4"/>
    <property type="match status" value="1"/>
</dbReference>
<dbReference type="FunFam" id="3.40.50.300:FF:000237">
    <property type="entry name" value="replication factor C subunit 4"/>
    <property type="match status" value="1"/>
</dbReference>
<dbReference type="Gene3D" id="1.10.8.60">
    <property type="match status" value="1"/>
</dbReference>
<dbReference type="Gene3D" id="1.20.272.10">
    <property type="match status" value="1"/>
</dbReference>
<dbReference type="Gene3D" id="3.40.50.300">
    <property type="entry name" value="P-loop containing nucleotide triphosphate hydrolases"/>
    <property type="match status" value="1"/>
</dbReference>
<dbReference type="InterPro" id="IPR003593">
    <property type="entry name" value="AAA+_ATPase"/>
</dbReference>
<dbReference type="InterPro" id="IPR003959">
    <property type="entry name" value="ATPase_AAA_core"/>
</dbReference>
<dbReference type="InterPro" id="IPR008921">
    <property type="entry name" value="DNA_pol3_clamp-load_cplx_C"/>
</dbReference>
<dbReference type="InterPro" id="IPR050238">
    <property type="entry name" value="DNA_Rep/Repair_Clamp_Loader"/>
</dbReference>
<dbReference type="InterPro" id="IPR027417">
    <property type="entry name" value="P-loop_NTPase"/>
</dbReference>
<dbReference type="InterPro" id="IPR013748">
    <property type="entry name" value="Rep_factorC_C"/>
</dbReference>
<dbReference type="InterPro" id="IPR047854">
    <property type="entry name" value="RFC_lid"/>
</dbReference>
<dbReference type="NCBIfam" id="NF001679">
    <property type="entry name" value="PRK00440.1"/>
    <property type="match status" value="1"/>
</dbReference>
<dbReference type="PANTHER" id="PTHR11669">
    <property type="entry name" value="REPLICATION FACTOR C / DNA POLYMERASE III GAMMA-TAU SUBUNIT"/>
    <property type="match status" value="1"/>
</dbReference>
<dbReference type="PANTHER" id="PTHR11669:SF20">
    <property type="entry name" value="REPLICATION FACTOR C SUBUNIT 4"/>
    <property type="match status" value="1"/>
</dbReference>
<dbReference type="Pfam" id="PF00004">
    <property type="entry name" value="AAA"/>
    <property type="match status" value="1"/>
</dbReference>
<dbReference type="Pfam" id="PF21960">
    <property type="entry name" value="RCF1-5-like_lid"/>
    <property type="match status" value="1"/>
</dbReference>
<dbReference type="Pfam" id="PF08542">
    <property type="entry name" value="Rep_fac_C"/>
    <property type="match status" value="1"/>
</dbReference>
<dbReference type="SMART" id="SM00382">
    <property type="entry name" value="AAA"/>
    <property type="match status" value="1"/>
</dbReference>
<dbReference type="SUPFAM" id="SSF52540">
    <property type="entry name" value="P-loop containing nucleoside triphosphate hydrolases"/>
    <property type="match status" value="1"/>
</dbReference>
<dbReference type="SUPFAM" id="SSF48019">
    <property type="entry name" value="post-AAA+ oligomerization domain-like"/>
    <property type="match status" value="1"/>
</dbReference>